<dbReference type="EMBL" id="AC022288">
    <property type="protein sequence ID" value="AAG52216.1"/>
    <property type="molecule type" value="Genomic_DNA"/>
</dbReference>
<dbReference type="EMBL" id="CP002684">
    <property type="protein sequence ID" value="AEE31636.1"/>
    <property type="molecule type" value="Genomic_DNA"/>
</dbReference>
<dbReference type="EMBL" id="CP002684">
    <property type="protein sequence ID" value="ANM57911.1"/>
    <property type="molecule type" value="Genomic_DNA"/>
</dbReference>
<dbReference type="PIR" id="E86462">
    <property type="entry name" value="E86462"/>
</dbReference>
<dbReference type="RefSeq" id="NP_001319139.1">
    <property type="nucleotide sequence ID" value="NM_001333070.1"/>
</dbReference>
<dbReference type="RefSeq" id="NP_174650.1">
    <property type="nucleotide sequence ID" value="NM_103110.1"/>
</dbReference>
<dbReference type="SMR" id="Q9C8U5"/>
<dbReference type="FunCoup" id="Q9C8U5">
    <property type="interactions" value="16"/>
</dbReference>
<dbReference type="STRING" id="3702.Q9C8U5"/>
<dbReference type="PaxDb" id="3702-AT1G33880.1"/>
<dbReference type="EnsemblPlants" id="AT1G33880.1">
    <property type="protein sequence ID" value="AT1G33880.1"/>
    <property type="gene ID" value="AT1G33880"/>
</dbReference>
<dbReference type="EnsemblPlants" id="AT1G33880.2">
    <property type="protein sequence ID" value="AT1G33880.2"/>
    <property type="gene ID" value="AT1G33880"/>
</dbReference>
<dbReference type="GeneID" id="840285"/>
<dbReference type="Gramene" id="AT1G33880.1">
    <property type="protein sequence ID" value="AT1G33880.1"/>
    <property type="gene ID" value="AT1G33880"/>
</dbReference>
<dbReference type="Gramene" id="AT1G33880.2">
    <property type="protein sequence ID" value="AT1G33880.2"/>
    <property type="gene ID" value="AT1G33880"/>
</dbReference>
<dbReference type="KEGG" id="ath:AT1G33880"/>
<dbReference type="Araport" id="AT1G33880"/>
<dbReference type="TAIR" id="AT1G33880">
    <property type="gene designation" value="IAN2"/>
</dbReference>
<dbReference type="eggNOG" id="ENOG502R7PE">
    <property type="taxonomic scope" value="Eukaryota"/>
</dbReference>
<dbReference type="HOGENOM" id="CLU_010468_3_3_1"/>
<dbReference type="InParanoid" id="Q9C8U5"/>
<dbReference type="OMA" id="TCESDRI"/>
<dbReference type="PhylomeDB" id="Q9C8U5"/>
<dbReference type="PRO" id="PR:Q9C8U5"/>
<dbReference type="Proteomes" id="UP000006548">
    <property type="component" value="Chromosome 1"/>
</dbReference>
<dbReference type="ExpressionAtlas" id="Q9C8U5">
    <property type="expression patterns" value="baseline and differential"/>
</dbReference>
<dbReference type="GO" id="GO:0005783">
    <property type="term" value="C:endoplasmic reticulum"/>
    <property type="evidence" value="ECO:0000314"/>
    <property type="project" value="TAIR"/>
</dbReference>
<dbReference type="GO" id="GO:0005886">
    <property type="term" value="C:plasma membrane"/>
    <property type="evidence" value="ECO:0000314"/>
    <property type="project" value="TAIR"/>
</dbReference>
<dbReference type="GO" id="GO:0005525">
    <property type="term" value="F:GTP binding"/>
    <property type="evidence" value="ECO:0007669"/>
    <property type="project" value="UniProtKB-KW"/>
</dbReference>
<dbReference type="GO" id="GO:0034605">
    <property type="term" value="P:cellular response to heat"/>
    <property type="evidence" value="ECO:0000316"/>
    <property type="project" value="TAIR"/>
</dbReference>
<dbReference type="GO" id="GO:0030968">
    <property type="term" value="P:endoplasmic reticulum unfolded protein response"/>
    <property type="evidence" value="ECO:0000316"/>
    <property type="project" value="TAIR"/>
</dbReference>
<dbReference type="CDD" id="cd01852">
    <property type="entry name" value="AIG1"/>
    <property type="match status" value="1"/>
</dbReference>
<dbReference type="FunFam" id="3.40.50.300:FF:000840">
    <property type="entry name" value="Immune-associated nucleotide-binding protein 9"/>
    <property type="match status" value="1"/>
</dbReference>
<dbReference type="Gene3D" id="3.40.50.300">
    <property type="entry name" value="P-loop containing nucleotide triphosphate hydrolases"/>
    <property type="match status" value="1"/>
</dbReference>
<dbReference type="InterPro" id="IPR006703">
    <property type="entry name" value="G_AIG1"/>
</dbReference>
<dbReference type="InterPro" id="IPR045058">
    <property type="entry name" value="GIMA/IAN/Toc"/>
</dbReference>
<dbReference type="InterPro" id="IPR027417">
    <property type="entry name" value="P-loop_NTPase"/>
</dbReference>
<dbReference type="PANTHER" id="PTHR10903:SF146">
    <property type="entry name" value="AIG1-LIKE PROTEIN_ 48352-49494-RELATED"/>
    <property type="match status" value="1"/>
</dbReference>
<dbReference type="PANTHER" id="PTHR10903">
    <property type="entry name" value="GTPASE, IMAP FAMILY MEMBER-RELATED"/>
    <property type="match status" value="1"/>
</dbReference>
<dbReference type="Pfam" id="PF04548">
    <property type="entry name" value="AIG1"/>
    <property type="match status" value="1"/>
</dbReference>
<dbReference type="SUPFAM" id="SSF52540">
    <property type="entry name" value="P-loop containing nucleoside triphosphate hydrolases"/>
    <property type="match status" value="1"/>
</dbReference>
<dbReference type="PROSITE" id="PS51720">
    <property type="entry name" value="G_AIG1"/>
    <property type="match status" value="1"/>
</dbReference>
<accession>Q9C8U5</accession>
<reference key="1">
    <citation type="journal article" date="2000" name="Nature">
        <title>Sequence and analysis of chromosome 1 of the plant Arabidopsis thaliana.</title>
        <authorList>
            <person name="Theologis A."/>
            <person name="Ecker J.R."/>
            <person name="Palm C.J."/>
            <person name="Federspiel N.A."/>
            <person name="Kaul S."/>
            <person name="White O."/>
            <person name="Alonso J."/>
            <person name="Altafi H."/>
            <person name="Araujo R."/>
            <person name="Bowman C.L."/>
            <person name="Brooks S.Y."/>
            <person name="Buehler E."/>
            <person name="Chan A."/>
            <person name="Chao Q."/>
            <person name="Chen H."/>
            <person name="Cheuk R.F."/>
            <person name="Chin C.W."/>
            <person name="Chung M.K."/>
            <person name="Conn L."/>
            <person name="Conway A.B."/>
            <person name="Conway A.R."/>
            <person name="Creasy T.H."/>
            <person name="Dewar K."/>
            <person name="Dunn P."/>
            <person name="Etgu P."/>
            <person name="Feldblyum T.V."/>
            <person name="Feng J.-D."/>
            <person name="Fong B."/>
            <person name="Fujii C.Y."/>
            <person name="Gill J.E."/>
            <person name="Goldsmith A.D."/>
            <person name="Haas B."/>
            <person name="Hansen N.F."/>
            <person name="Hughes B."/>
            <person name="Huizar L."/>
            <person name="Hunter J.L."/>
            <person name="Jenkins J."/>
            <person name="Johnson-Hopson C."/>
            <person name="Khan S."/>
            <person name="Khaykin E."/>
            <person name="Kim C.J."/>
            <person name="Koo H.L."/>
            <person name="Kremenetskaia I."/>
            <person name="Kurtz D.B."/>
            <person name="Kwan A."/>
            <person name="Lam B."/>
            <person name="Langin-Hooper S."/>
            <person name="Lee A."/>
            <person name="Lee J.M."/>
            <person name="Lenz C.A."/>
            <person name="Li J.H."/>
            <person name="Li Y.-P."/>
            <person name="Lin X."/>
            <person name="Liu S.X."/>
            <person name="Liu Z.A."/>
            <person name="Luros J.S."/>
            <person name="Maiti R."/>
            <person name="Marziali A."/>
            <person name="Militscher J."/>
            <person name="Miranda M."/>
            <person name="Nguyen M."/>
            <person name="Nierman W.C."/>
            <person name="Osborne B.I."/>
            <person name="Pai G."/>
            <person name="Peterson J."/>
            <person name="Pham P.K."/>
            <person name="Rizzo M."/>
            <person name="Rooney T."/>
            <person name="Rowley D."/>
            <person name="Sakano H."/>
            <person name="Salzberg S.L."/>
            <person name="Schwartz J.R."/>
            <person name="Shinn P."/>
            <person name="Southwick A.M."/>
            <person name="Sun H."/>
            <person name="Tallon L.J."/>
            <person name="Tambunga G."/>
            <person name="Toriumi M.J."/>
            <person name="Town C.D."/>
            <person name="Utterback T."/>
            <person name="Van Aken S."/>
            <person name="Vaysberg M."/>
            <person name="Vysotskaia V.S."/>
            <person name="Walker M."/>
            <person name="Wu D."/>
            <person name="Yu G."/>
            <person name="Fraser C.M."/>
            <person name="Venter J.C."/>
            <person name="Davis R.W."/>
        </authorList>
    </citation>
    <scope>NUCLEOTIDE SEQUENCE [LARGE SCALE GENOMIC DNA]</scope>
    <source>
        <strain>cv. Columbia</strain>
    </source>
</reference>
<reference key="2">
    <citation type="journal article" date="2017" name="Plant J.">
        <title>Araport11: a complete reannotation of the Arabidopsis thaliana reference genome.</title>
        <authorList>
            <person name="Cheng C.Y."/>
            <person name="Krishnakumar V."/>
            <person name="Chan A.P."/>
            <person name="Thibaud-Nissen F."/>
            <person name="Schobel S."/>
            <person name="Town C.D."/>
        </authorList>
    </citation>
    <scope>GENOME REANNOTATION</scope>
    <source>
        <strain>cv. Columbia</strain>
    </source>
</reference>
<reference key="3">
    <citation type="journal article" date="2008" name="J. Plant Physiol.">
        <title>Computational identification and analysis of immune-associated nucleotide gene family in Arabidopsis thaliana.</title>
        <authorList>
            <person name="Liu C."/>
            <person name="Wang T."/>
            <person name="Zhang W."/>
            <person name="Li X."/>
        </authorList>
    </citation>
    <scope>GENE FAMILY</scope>
    <scope>NOMENCLATURE</scope>
</reference>
<proteinExistence type="inferred from homology"/>
<evidence type="ECO:0000250" key="1">
    <source>
        <dbReference type="UniProtKB" id="Q8NHV1"/>
    </source>
</evidence>
<evidence type="ECO:0000255" key="2">
    <source>
        <dbReference type="PROSITE-ProRule" id="PRU01057"/>
    </source>
</evidence>
<evidence type="ECO:0000303" key="3">
    <source>
    </source>
</evidence>
<evidence type="ECO:0000305" key="4"/>
<evidence type="ECO:0000305" key="5">
    <source>
    </source>
</evidence>
<evidence type="ECO:0000312" key="6">
    <source>
        <dbReference type="Araport" id="AT1G33880"/>
    </source>
</evidence>
<evidence type="ECO:0000312" key="7">
    <source>
        <dbReference type="EMBL" id="AAG52216.1"/>
    </source>
</evidence>
<organism>
    <name type="scientific">Arabidopsis thaliana</name>
    <name type="common">Mouse-ear cress</name>
    <dbReference type="NCBI Taxonomy" id="3702"/>
    <lineage>
        <taxon>Eukaryota</taxon>
        <taxon>Viridiplantae</taxon>
        <taxon>Streptophyta</taxon>
        <taxon>Embryophyta</taxon>
        <taxon>Tracheophyta</taxon>
        <taxon>Spermatophyta</taxon>
        <taxon>Magnoliopsida</taxon>
        <taxon>eudicotyledons</taxon>
        <taxon>Gunneridae</taxon>
        <taxon>Pentapetalae</taxon>
        <taxon>rosids</taxon>
        <taxon>malvids</taxon>
        <taxon>Brassicales</taxon>
        <taxon>Brassicaceae</taxon>
        <taxon>Camelineae</taxon>
        <taxon>Arabidopsis</taxon>
    </lineage>
</organism>
<sequence length="234" mass="26378">MGTSVSKPVSDDKKKGTSVSKPVKNIVLVGRSVNGICTTGNNILGQNKFGSEGAFMHCQMYSTTTPDGQMINVIKTPGMFDLSVSEDYISKEIINCLTLAEEGVHAVLFVLSMKNRITQEEEYALNTLQRIFGSKILEYLIFLLIDGEKFEAKEFEDYFPECCPEFLMRVLRFCNGRKVLFNNMTNDEGVKAEQVNQVMAHVAAISKKNDEKPYTEDMYRNIKVNTFFSLIAFI</sequence>
<comment type="tissue specificity">
    <text evidence="5">Mostly expressed in pollen. Also detected in lateral roots and radicles.</text>
</comment>
<comment type="induction">
    <text evidence="5">Up-regulated by brassinolides. Down-regulated by 2-aminoethoxyvinylglycine (AVG), high CO(2), isoxaben, and propiconazole treatments.</text>
</comment>
<comment type="similarity">
    <text evidence="4">Belongs to the TRAFAC class TrmE-Era-EngA-EngB-Septin-like GTPase superfamily. AIG1/Toc34/Toc159-like paraseptin GTPase family. IAN subfamily.</text>
</comment>
<feature type="chain" id="PRO_0000438026" description="Immune-associated nucleotide-binding protein 2">
    <location>
        <begin position="1"/>
        <end position="234"/>
    </location>
</feature>
<feature type="domain" description="AIG1-type G" evidence="2">
    <location>
        <begin position="21"/>
        <end position="223"/>
    </location>
</feature>
<feature type="binding site" evidence="1">
    <location>
        <begin position="30"/>
        <end position="38"/>
    </location>
    <ligand>
        <name>GTP</name>
        <dbReference type="ChEBI" id="CHEBI:37565"/>
    </ligand>
</feature>
<feature type="binding site" evidence="1">
    <location>
        <position position="51"/>
    </location>
    <ligand>
        <name>GTP</name>
        <dbReference type="ChEBI" id="CHEBI:37565"/>
    </ligand>
</feature>
<feature type="binding site" evidence="1">
    <location>
        <position position="183"/>
    </location>
    <ligand>
        <name>GTP</name>
        <dbReference type="ChEBI" id="CHEBI:37565"/>
    </ligand>
</feature>
<name>IAN2_ARATH</name>
<protein>
    <recommendedName>
        <fullName evidence="3">Immune-associated nucleotide-binding protein 2</fullName>
        <shortName evidence="3">AtIAN2</shortName>
    </recommendedName>
    <alternativeName>
        <fullName evidence="4">AIG1-like protein</fullName>
    </alternativeName>
</protein>
<keyword id="KW-0342">GTP-binding</keyword>
<keyword id="KW-0547">Nucleotide-binding</keyword>
<keyword id="KW-1185">Reference proteome</keyword>
<gene>
    <name evidence="3" type="primary">IAN2</name>
    <name evidence="6" type="ordered locus">At1g33880</name>
    <name evidence="7" type="ORF">T3M13.10</name>
</gene>